<keyword id="KW-0963">Cytoplasm</keyword>
<keyword id="KW-0238">DNA-binding</keyword>
<keyword id="KW-0677">Repeat</keyword>
<keyword id="KW-0804">Transcription</keyword>
<keyword id="KW-0805">Transcription regulation</keyword>
<feature type="chain" id="PRO_0000230079" description="Transcriptional regulator MraZ">
    <location>
        <begin position="1"/>
        <end position="142"/>
    </location>
</feature>
<feature type="domain" description="SpoVT-AbrB 1" evidence="2">
    <location>
        <begin position="5"/>
        <end position="51"/>
    </location>
</feature>
<feature type="domain" description="SpoVT-AbrB 2" evidence="2">
    <location>
        <begin position="77"/>
        <end position="120"/>
    </location>
</feature>
<evidence type="ECO:0000255" key="1">
    <source>
        <dbReference type="HAMAP-Rule" id="MF_01008"/>
    </source>
</evidence>
<evidence type="ECO:0000255" key="2">
    <source>
        <dbReference type="PROSITE-ProRule" id="PRU01076"/>
    </source>
</evidence>
<accession>Q39JX9</accession>
<gene>
    <name evidence="1" type="primary">mraZ</name>
    <name type="ordered locus">Bcep18194_A3636</name>
</gene>
<name>MRAZ_BURL3</name>
<proteinExistence type="inferred from homology"/>
<organism>
    <name type="scientific">Burkholderia lata (strain ATCC 17760 / DSM 23089 / LMG 22485 / NCIMB 9086 / R18194 / 383)</name>
    <dbReference type="NCBI Taxonomy" id="482957"/>
    <lineage>
        <taxon>Bacteria</taxon>
        <taxon>Pseudomonadati</taxon>
        <taxon>Pseudomonadota</taxon>
        <taxon>Betaproteobacteria</taxon>
        <taxon>Burkholderiales</taxon>
        <taxon>Burkholderiaceae</taxon>
        <taxon>Burkholderia</taxon>
        <taxon>Burkholderia cepacia complex</taxon>
    </lineage>
</organism>
<dbReference type="EMBL" id="CP000151">
    <property type="protein sequence ID" value="ABB07237.1"/>
    <property type="molecule type" value="Genomic_DNA"/>
</dbReference>
<dbReference type="RefSeq" id="WP_006487094.1">
    <property type="nucleotide sequence ID" value="NZ_WNDV01000062.1"/>
</dbReference>
<dbReference type="SMR" id="Q39JX9"/>
<dbReference type="GeneID" id="98106606"/>
<dbReference type="KEGG" id="bur:Bcep18194_A3636"/>
<dbReference type="HOGENOM" id="CLU_107907_2_1_4"/>
<dbReference type="Proteomes" id="UP000002705">
    <property type="component" value="Chromosome 1"/>
</dbReference>
<dbReference type="GO" id="GO:0005737">
    <property type="term" value="C:cytoplasm"/>
    <property type="evidence" value="ECO:0007669"/>
    <property type="project" value="UniProtKB-UniRule"/>
</dbReference>
<dbReference type="GO" id="GO:0009295">
    <property type="term" value="C:nucleoid"/>
    <property type="evidence" value="ECO:0007669"/>
    <property type="project" value="UniProtKB-SubCell"/>
</dbReference>
<dbReference type="GO" id="GO:0003700">
    <property type="term" value="F:DNA-binding transcription factor activity"/>
    <property type="evidence" value="ECO:0007669"/>
    <property type="project" value="UniProtKB-UniRule"/>
</dbReference>
<dbReference type="GO" id="GO:0000976">
    <property type="term" value="F:transcription cis-regulatory region binding"/>
    <property type="evidence" value="ECO:0007669"/>
    <property type="project" value="TreeGrafter"/>
</dbReference>
<dbReference type="GO" id="GO:2000143">
    <property type="term" value="P:negative regulation of DNA-templated transcription initiation"/>
    <property type="evidence" value="ECO:0007669"/>
    <property type="project" value="TreeGrafter"/>
</dbReference>
<dbReference type="CDD" id="cd16321">
    <property type="entry name" value="MraZ_C"/>
    <property type="match status" value="1"/>
</dbReference>
<dbReference type="CDD" id="cd16320">
    <property type="entry name" value="MraZ_N"/>
    <property type="match status" value="1"/>
</dbReference>
<dbReference type="Gene3D" id="3.40.1550.20">
    <property type="entry name" value="Transcriptional regulator MraZ domain"/>
    <property type="match status" value="1"/>
</dbReference>
<dbReference type="HAMAP" id="MF_01008">
    <property type="entry name" value="MraZ"/>
    <property type="match status" value="1"/>
</dbReference>
<dbReference type="InterPro" id="IPR003444">
    <property type="entry name" value="MraZ"/>
</dbReference>
<dbReference type="InterPro" id="IPR035644">
    <property type="entry name" value="MraZ_C"/>
</dbReference>
<dbReference type="InterPro" id="IPR020603">
    <property type="entry name" value="MraZ_dom"/>
</dbReference>
<dbReference type="InterPro" id="IPR035642">
    <property type="entry name" value="MraZ_N"/>
</dbReference>
<dbReference type="InterPro" id="IPR038619">
    <property type="entry name" value="MraZ_sf"/>
</dbReference>
<dbReference type="InterPro" id="IPR007159">
    <property type="entry name" value="SpoVT-AbrB_dom"/>
</dbReference>
<dbReference type="InterPro" id="IPR037914">
    <property type="entry name" value="SpoVT-AbrB_sf"/>
</dbReference>
<dbReference type="NCBIfam" id="TIGR00242">
    <property type="entry name" value="division/cell wall cluster transcriptional repressor MraZ"/>
    <property type="match status" value="1"/>
</dbReference>
<dbReference type="PANTHER" id="PTHR34701">
    <property type="entry name" value="TRANSCRIPTIONAL REGULATOR MRAZ"/>
    <property type="match status" value="1"/>
</dbReference>
<dbReference type="PANTHER" id="PTHR34701:SF1">
    <property type="entry name" value="TRANSCRIPTIONAL REGULATOR MRAZ"/>
    <property type="match status" value="1"/>
</dbReference>
<dbReference type="Pfam" id="PF02381">
    <property type="entry name" value="MraZ"/>
    <property type="match status" value="2"/>
</dbReference>
<dbReference type="SUPFAM" id="SSF89447">
    <property type="entry name" value="AbrB/MazE/MraZ-like"/>
    <property type="match status" value="1"/>
</dbReference>
<dbReference type="PROSITE" id="PS51740">
    <property type="entry name" value="SPOVT_ABRB"/>
    <property type="match status" value="2"/>
</dbReference>
<sequence length="142" mass="15869">MFQGASALTLDAKGRMSVPARYREALQGQAEGRVTVTKHPDGCLLLFPRPEWEVFRAKIAALPMDAHWWRRIFLGNAMDVDLDSAGRILVSPELRMAAGLEKEVMLLGMGSHFELWDSQTYNAKEQAAMAQGMPDALKNFTF</sequence>
<protein>
    <recommendedName>
        <fullName>Transcriptional regulator MraZ</fullName>
    </recommendedName>
</protein>
<reference key="1">
    <citation type="submission" date="2005-10" db="EMBL/GenBank/DDBJ databases">
        <title>Complete sequence of chromosome 1 of Burkholderia sp. 383.</title>
        <authorList>
            <consortium name="US DOE Joint Genome Institute"/>
            <person name="Copeland A."/>
            <person name="Lucas S."/>
            <person name="Lapidus A."/>
            <person name="Barry K."/>
            <person name="Detter J.C."/>
            <person name="Glavina T."/>
            <person name="Hammon N."/>
            <person name="Israni S."/>
            <person name="Pitluck S."/>
            <person name="Chain P."/>
            <person name="Malfatti S."/>
            <person name="Shin M."/>
            <person name="Vergez L."/>
            <person name="Schmutz J."/>
            <person name="Larimer F."/>
            <person name="Land M."/>
            <person name="Kyrpides N."/>
            <person name="Lykidis A."/>
            <person name="Richardson P."/>
        </authorList>
    </citation>
    <scope>NUCLEOTIDE SEQUENCE [LARGE SCALE GENOMIC DNA]</scope>
    <source>
        <strain>ATCC 17760 / DSM 23089 / LMG 22485 / NCIMB 9086 / R18194 / 383</strain>
    </source>
</reference>
<comment type="subunit">
    <text evidence="1">Forms oligomers.</text>
</comment>
<comment type="subcellular location">
    <subcellularLocation>
        <location evidence="1">Cytoplasm</location>
        <location evidence="1">Nucleoid</location>
    </subcellularLocation>
</comment>
<comment type="similarity">
    <text evidence="1">Belongs to the MraZ family.</text>
</comment>